<proteinExistence type="evidence at protein level"/>
<sequence>MPVAGSELPRRPLPPAAQERDAEPRPPHGELQYLGQIQHILRCGVRKDDRTGTGTLSVFGMQARYSLRDEFPLLTTKRVFWKGVLEELLWFIKGSTNAKELSSKGVKIWDANGSRDFLDSLGFSTREEGDLGPVYGFQWRHFGAEYRDMESDYSGQGVDQLQRVIDTIKTNPDDRRIIMCAWNPRDLPLMALPPCHALCQFYVVNSELSCQLYQRSGDMGLGVPFNIASYALLTYMIAHITGLKPGDFIHTLGDAHIYLNHIEPLKIQLQREPRPFPKLRILRKVEKIDDFKAEDFQIEGYNPHPTIKMEMAV</sequence>
<accession>P04818</accession>
<accession>Q8WYK3</accession>
<accession>Q8WYK4</accession>
<evidence type="ECO:0000250" key="1">
    <source>
        <dbReference type="UniProtKB" id="P0A884"/>
    </source>
</evidence>
<evidence type="ECO:0000250" key="2">
    <source>
        <dbReference type="UniProtKB" id="P45352"/>
    </source>
</evidence>
<evidence type="ECO:0000256" key="3">
    <source>
        <dbReference type="SAM" id="MobiDB-lite"/>
    </source>
</evidence>
<evidence type="ECO:0000269" key="4">
    <source>
    </source>
</evidence>
<evidence type="ECO:0000269" key="5">
    <source>
    </source>
</evidence>
<evidence type="ECO:0000269" key="6">
    <source>
    </source>
</evidence>
<evidence type="ECO:0000269" key="7">
    <source>
    </source>
</evidence>
<evidence type="ECO:0000269" key="8">
    <source>
    </source>
</evidence>
<evidence type="ECO:0000303" key="9">
    <source>
    </source>
</evidence>
<evidence type="ECO:0000305" key="10"/>
<evidence type="ECO:0000305" key="11">
    <source>
    </source>
</evidence>
<evidence type="ECO:0000312" key="12">
    <source>
        <dbReference type="HGNC" id="HGNC:12441"/>
    </source>
</evidence>
<evidence type="ECO:0007744" key="13">
    <source>
    </source>
</evidence>
<evidence type="ECO:0007744" key="14">
    <source>
    </source>
</evidence>
<evidence type="ECO:0007744" key="15">
    <source>
    </source>
</evidence>
<evidence type="ECO:0007829" key="16">
    <source>
        <dbReference type="PDB" id="1HVY"/>
    </source>
</evidence>
<evidence type="ECO:0007829" key="17">
    <source>
        <dbReference type="PDB" id="1HZW"/>
    </source>
</evidence>
<evidence type="ECO:0007829" key="18">
    <source>
        <dbReference type="PDB" id="1YPV"/>
    </source>
</evidence>
<evidence type="ECO:0007829" key="19">
    <source>
        <dbReference type="PDB" id="3EBU"/>
    </source>
</evidence>
<evidence type="ECO:0007829" key="20">
    <source>
        <dbReference type="PDB" id="3ED7"/>
    </source>
</evidence>
<evidence type="ECO:0007829" key="21">
    <source>
        <dbReference type="PDB" id="3EHI"/>
    </source>
</evidence>
<evidence type="ECO:0007829" key="22">
    <source>
        <dbReference type="PDB" id="4E28"/>
    </source>
</evidence>
<evidence type="ECO:0007829" key="23">
    <source>
        <dbReference type="PDB" id="6OJU"/>
    </source>
</evidence>
<feature type="initiator methionine" description="Removed" evidence="6 8">
    <location>
        <position position="1"/>
    </location>
</feature>
<feature type="chain" id="PRO_0000140901" description="Thymidylate synthase">
    <location>
        <begin position="2"/>
        <end position="313"/>
    </location>
</feature>
<feature type="region of interest" description="Disordered" evidence="3">
    <location>
        <begin position="1"/>
        <end position="28"/>
    </location>
</feature>
<feature type="compositionally biased region" description="Basic and acidic residues" evidence="3">
    <location>
        <begin position="18"/>
        <end position="28"/>
    </location>
</feature>
<feature type="active site" description="Nucleophile" evidence="1">
    <location>
        <position position="195"/>
    </location>
</feature>
<feature type="binding site" description="in other chain" evidence="1">
    <location>
        <position position="50"/>
    </location>
    <ligand>
        <name>dUMP</name>
        <dbReference type="ChEBI" id="CHEBI:246422"/>
        <note>ligand shared between dimeric partners</note>
    </ligand>
</feature>
<feature type="binding site" evidence="2">
    <location>
        <begin position="175"/>
        <end position="176"/>
    </location>
    <ligand>
        <name>dUMP</name>
        <dbReference type="ChEBI" id="CHEBI:246422"/>
        <note>ligand shared between dimeric partners</note>
    </ligand>
</feature>
<feature type="binding site" description="in other chain" evidence="2">
    <location>
        <begin position="195"/>
        <end position="196"/>
    </location>
    <ligand>
        <name>dUMP</name>
        <dbReference type="ChEBI" id="CHEBI:246422"/>
        <note>ligand shared between dimeric partners</note>
    </ligand>
</feature>
<feature type="binding site" description="in other chain" evidence="2">
    <location>
        <begin position="215"/>
        <end position="218"/>
    </location>
    <ligand>
        <name>dUMP</name>
        <dbReference type="ChEBI" id="CHEBI:246422"/>
        <note>ligand shared between dimeric partners</note>
    </ligand>
</feature>
<feature type="binding site" evidence="1">
    <location>
        <position position="218"/>
    </location>
    <ligand>
        <name>(6R)-5,10-methylene-5,6,7,8-tetrahydrofolate</name>
        <dbReference type="ChEBI" id="CHEBI:15636"/>
    </ligand>
</feature>
<feature type="binding site" description="in other chain" evidence="1">
    <location>
        <position position="226"/>
    </location>
    <ligand>
        <name>dUMP</name>
        <dbReference type="ChEBI" id="CHEBI:246422"/>
        <note>ligand shared between dimeric partners</note>
    </ligand>
</feature>
<feature type="binding site" description="in other chain" evidence="2">
    <location>
        <begin position="256"/>
        <end position="258"/>
    </location>
    <ligand>
        <name>dUMP</name>
        <dbReference type="ChEBI" id="CHEBI:246422"/>
        <note>ligand shared between dimeric partners</note>
    </ligand>
</feature>
<feature type="binding site" evidence="1">
    <location>
        <position position="312"/>
    </location>
    <ligand>
        <name>(6R)-5,10-methylene-5,6,7,8-tetrahydrofolate</name>
        <dbReference type="ChEBI" id="CHEBI:15636"/>
    </ligand>
</feature>
<feature type="modified residue" description="Phosphoserine" evidence="13 14">
    <location>
        <position position="114"/>
    </location>
</feature>
<feature type="cross-link" description="Glycyl lysine isopeptide (Lys-Gly) (interchain with G-Cter in SUMO2)" evidence="15">
    <location>
        <position position="287"/>
    </location>
</feature>
<feature type="cross-link" description="Glycyl lysine isopeptide (Lys-Gly) (interchain with G-Cter in SUMO2)" evidence="15">
    <location>
        <position position="292"/>
    </location>
</feature>
<feature type="cross-link" description="Glycyl lysine isopeptide (Lys-Gly) (interchain with G-Cter in SUMO2)" evidence="15">
    <location>
        <position position="308"/>
    </location>
</feature>
<feature type="splice variant" id="VSP_047745" description="In isoform 3." evidence="9">
    <location>
        <begin position="69"/>
        <end position="151"/>
    </location>
</feature>
<feature type="splice variant" id="VSP_047746" description="In isoform 2." evidence="9">
    <location>
        <begin position="152"/>
        <end position="185"/>
    </location>
</feature>
<feature type="sequence variant" id="VAR_087693" description="In DKCD; uncertain significance; dbSNP:rs2144258402." evidence="7">
    <original>E</original>
    <variation>K</variation>
    <location>
        <position position="87"/>
    </location>
</feature>
<feature type="sequence variant" id="VAR_087694" description="In DKCD; reduced TYMS levels in patient cells." evidence="7">
    <location>
        <begin position="115"/>
        <end position="313"/>
    </location>
</feature>
<feature type="sequence variant" id="VAR_087695" description="In DKCD; uncertain significance; dbSNP:rs894600614." evidence="7">
    <original>Q</original>
    <variation>H</variation>
    <location>
        <position position="160"/>
    </location>
</feature>
<feature type="sequence variant" id="VAR_087696" description="In DKCD." evidence="7">
    <location>
        <begin position="271"/>
        <end position="313"/>
    </location>
</feature>
<feature type="helix" evidence="20">
    <location>
        <begin position="30"/>
        <end position="43"/>
    </location>
</feature>
<feature type="strand" evidence="20">
    <location>
        <begin position="45"/>
        <end position="48"/>
    </location>
</feature>
<feature type="strand" evidence="18">
    <location>
        <begin position="50"/>
        <end position="52"/>
    </location>
</feature>
<feature type="strand" evidence="20">
    <location>
        <begin position="54"/>
        <end position="66"/>
    </location>
</feature>
<feature type="strand" evidence="19">
    <location>
        <begin position="68"/>
        <end position="70"/>
    </location>
</feature>
<feature type="turn" evidence="20">
    <location>
        <begin position="75"/>
        <end position="78"/>
    </location>
</feature>
<feature type="helix" evidence="20">
    <location>
        <begin position="81"/>
        <end position="92"/>
    </location>
</feature>
<feature type="helix" evidence="20">
    <location>
        <begin position="98"/>
        <end position="101"/>
    </location>
</feature>
<feature type="turn" evidence="16">
    <location>
        <begin position="103"/>
        <end position="105"/>
    </location>
</feature>
<feature type="turn" evidence="17">
    <location>
        <begin position="108"/>
        <end position="110"/>
    </location>
</feature>
<feature type="helix" evidence="16">
    <location>
        <begin position="111"/>
        <end position="113"/>
    </location>
</feature>
<feature type="helix" evidence="20">
    <location>
        <begin position="117"/>
        <end position="120"/>
    </location>
</feature>
<feature type="helix" evidence="20">
    <location>
        <begin position="123"/>
        <end position="127"/>
    </location>
</feature>
<feature type="strand" evidence="23">
    <location>
        <begin position="128"/>
        <end position="130"/>
    </location>
</feature>
<feature type="turn" evidence="22">
    <location>
        <begin position="132"/>
        <end position="134"/>
    </location>
</feature>
<feature type="helix" evidence="20">
    <location>
        <begin position="136"/>
        <end position="141"/>
    </location>
</feature>
<feature type="strand" evidence="20">
    <location>
        <begin position="149"/>
        <end position="151"/>
    </location>
</feature>
<feature type="strand" evidence="21">
    <location>
        <begin position="156"/>
        <end position="158"/>
    </location>
</feature>
<feature type="helix" evidence="20">
    <location>
        <begin position="160"/>
        <end position="170"/>
    </location>
</feature>
<feature type="strand" evidence="20">
    <location>
        <begin position="178"/>
        <end position="181"/>
    </location>
</feature>
<feature type="helix" evidence="20">
    <location>
        <begin position="184"/>
        <end position="186"/>
    </location>
</feature>
<feature type="turn" evidence="20">
    <location>
        <begin position="187"/>
        <end position="189"/>
    </location>
</feature>
<feature type="strand" evidence="20">
    <location>
        <begin position="190"/>
        <end position="192"/>
    </location>
</feature>
<feature type="strand" evidence="20">
    <location>
        <begin position="196"/>
        <end position="204"/>
    </location>
</feature>
<feature type="strand" evidence="20">
    <location>
        <begin position="207"/>
        <end position="218"/>
    </location>
</feature>
<feature type="turn" evidence="20">
    <location>
        <begin position="219"/>
        <end position="221"/>
    </location>
</feature>
<feature type="helix" evidence="20">
    <location>
        <begin position="222"/>
        <end position="241"/>
    </location>
</feature>
<feature type="strand" evidence="20">
    <location>
        <begin position="244"/>
        <end position="258"/>
    </location>
</feature>
<feature type="helix" evidence="20">
    <location>
        <begin position="259"/>
        <end position="261"/>
    </location>
</feature>
<feature type="helix" evidence="20">
    <location>
        <begin position="262"/>
        <end position="268"/>
    </location>
</feature>
<feature type="strand" evidence="20">
    <location>
        <begin position="278"/>
        <end position="281"/>
    </location>
</feature>
<feature type="helix" evidence="20">
    <location>
        <begin position="288"/>
        <end position="290"/>
    </location>
</feature>
<feature type="helix" evidence="20">
    <location>
        <begin position="293"/>
        <end position="295"/>
    </location>
</feature>
<feature type="strand" evidence="20">
    <location>
        <begin position="296"/>
        <end position="300"/>
    </location>
</feature>
<dbReference type="EC" id="2.1.1.45" evidence="4"/>
<dbReference type="EMBL" id="X02308">
    <property type="protein sequence ID" value="CAA26178.1"/>
    <property type="molecule type" value="mRNA"/>
</dbReference>
<dbReference type="EMBL" id="D00596">
    <property type="protein sequence ID" value="BAA00472.1"/>
    <property type="molecule type" value="Genomic_DNA"/>
</dbReference>
<dbReference type="EMBL" id="AB077207">
    <property type="protein sequence ID" value="BAB83676.1"/>
    <property type="molecule type" value="mRNA"/>
</dbReference>
<dbReference type="EMBL" id="AB077208">
    <property type="protein sequence ID" value="BAB83677.1"/>
    <property type="molecule type" value="mRNA"/>
</dbReference>
<dbReference type="EMBL" id="AB062290">
    <property type="protein sequence ID" value="BAB93473.1"/>
    <property type="molecule type" value="mRNA"/>
</dbReference>
<dbReference type="EMBL" id="AP001178">
    <property type="status" value="NOT_ANNOTATED_CDS"/>
    <property type="molecule type" value="Genomic_DNA"/>
</dbReference>
<dbReference type="EMBL" id="CH471113">
    <property type="protein sequence ID" value="EAX01716.1"/>
    <property type="molecule type" value="Genomic_DNA"/>
</dbReference>
<dbReference type="EMBL" id="CH471113">
    <property type="protein sequence ID" value="EAX01720.1"/>
    <property type="molecule type" value="Genomic_DNA"/>
</dbReference>
<dbReference type="EMBL" id="BC002567">
    <property type="protein sequence ID" value="AAH02567.1"/>
    <property type="molecule type" value="mRNA"/>
</dbReference>
<dbReference type="EMBL" id="BC013919">
    <property type="protein sequence ID" value="AAH13919.1"/>
    <property type="molecule type" value="mRNA"/>
</dbReference>
<dbReference type="EMBL" id="BC083512">
    <property type="protein sequence ID" value="AAH83512.1"/>
    <property type="molecule type" value="mRNA"/>
</dbReference>
<dbReference type="EMBL" id="D00517">
    <property type="protein sequence ID" value="BAA00404.1"/>
    <property type="molecule type" value="Genomic_DNA"/>
</dbReference>
<dbReference type="CCDS" id="CCDS11821.1">
    <molecule id="P04818-1"/>
</dbReference>
<dbReference type="CCDS" id="CCDS86658.1">
    <molecule id="P04818-2"/>
</dbReference>
<dbReference type="CCDS" id="CCDS86659.1">
    <molecule id="P04818-3"/>
</dbReference>
<dbReference type="PIR" id="A23047">
    <property type="entry name" value="YXHUT"/>
</dbReference>
<dbReference type="RefSeq" id="NP_001062.1">
    <molecule id="P04818-1"/>
    <property type="nucleotide sequence ID" value="NM_001071.4"/>
</dbReference>
<dbReference type="RefSeq" id="NP_001341796.1">
    <molecule id="P04818-2"/>
    <property type="nucleotide sequence ID" value="NM_001354867.2"/>
</dbReference>
<dbReference type="RefSeq" id="NP_001341797.1">
    <molecule id="P04818-3"/>
    <property type="nucleotide sequence ID" value="NM_001354868.2"/>
</dbReference>
<dbReference type="PDB" id="1HVY">
    <property type="method" value="X-ray"/>
    <property type="resolution" value="1.90 A"/>
    <property type="chains" value="A/B/C/D=26-313"/>
</dbReference>
<dbReference type="PDB" id="1HW3">
    <property type="method" value="X-ray"/>
    <property type="resolution" value="2.00 A"/>
    <property type="chains" value="A=1-313"/>
</dbReference>
<dbReference type="PDB" id="1HW4">
    <property type="method" value="X-ray"/>
    <property type="resolution" value="2.06 A"/>
    <property type="chains" value="A=1-313"/>
</dbReference>
<dbReference type="PDB" id="1HZW">
    <property type="method" value="X-ray"/>
    <property type="resolution" value="2.00 A"/>
    <property type="chains" value="A/B=1-313"/>
</dbReference>
<dbReference type="PDB" id="1I00">
    <property type="method" value="X-ray"/>
    <property type="resolution" value="2.50 A"/>
    <property type="chains" value="A/B=1-313"/>
</dbReference>
<dbReference type="PDB" id="1JU6">
    <property type="method" value="X-ray"/>
    <property type="resolution" value="2.89 A"/>
    <property type="chains" value="A/B/C/D=1-313"/>
</dbReference>
<dbReference type="PDB" id="1JUJ">
    <property type="method" value="X-ray"/>
    <property type="resolution" value="3.00 A"/>
    <property type="chains" value="A/B/C/D=1-313"/>
</dbReference>
<dbReference type="PDB" id="1YPV">
    <property type="method" value="X-ray"/>
    <property type="resolution" value="1.80 A"/>
    <property type="chains" value="A=1-313"/>
</dbReference>
<dbReference type="PDB" id="2ONB">
    <property type="method" value="X-ray"/>
    <property type="resolution" value="2.70 A"/>
    <property type="chains" value="A=1-313"/>
</dbReference>
<dbReference type="PDB" id="2RD8">
    <property type="method" value="X-ray"/>
    <property type="resolution" value="2.50 A"/>
    <property type="chains" value="A/B=1-313"/>
</dbReference>
<dbReference type="PDB" id="2RDA">
    <property type="method" value="X-ray"/>
    <property type="resolution" value="2.67 A"/>
    <property type="chains" value="A/B/C/D/E/F=1-313"/>
</dbReference>
<dbReference type="PDB" id="3EAW">
    <property type="method" value="X-ray"/>
    <property type="resolution" value="1.86 A"/>
    <property type="chains" value="X=1-313"/>
</dbReference>
<dbReference type="PDB" id="3EBU">
    <property type="method" value="X-ray"/>
    <property type="resolution" value="2.05 A"/>
    <property type="chains" value="A=1-313"/>
</dbReference>
<dbReference type="PDB" id="3ED7">
    <property type="method" value="X-ray"/>
    <property type="resolution" value="1.56 A"/>
    <property type="chains" value="A=26-313"/>
</dbReference>
<dbReference type="PDB" id="3EDW">
    <property type="method" value="X-ray"/>
    <property type="resolution" value="1.75 A"/>
    <property type="chains" value="X=1-313"/>
</dbReference>
<dbReference type="PDB" id="3EF9">
    <property type="method" value="X-ray"/>
    <property type="resolution" value="3.20 A"/>
    <property type="chains" value="A=1-313"/>
</dbReference>
<dbReference type="PDB" id="3EGY">
    <property type="method" value="X-ray"/>
    <property type="resolution" value="2.18 A"/>
    <property type="chains" value="X=1-313"/>
</dbReference>
<dbReference type="PDB" id="3EHI">
    <property type="method" value="X-ray"/>
    <property type="resolution" value="2.00 A"/>
    <property type="chains" value="X=1-313"/>
</dbReference>
<dbReference type="PDB" id="3EJL">
    <property type="method" value="X-ray"/>
    <property type="resolution" value="3.20 A"/>
    <property type="chains" value="A/B/C/D=1-313"/>
</dbReference>
<dbReference type="PDB" id="3GG5">
    <property type="method" value="X-ray"/>
    <property type="resolution" value="2.77 A"/>
    <property type="chains" value="A/B/C/D=1-313"/>
</dbReference>
<dbReference type="PDB" id="3GH0">
    <property type="method" value="X-ray"/>
    <property type="resolution" value="1.56 A"/>
    <property type="chains" value="A=1-313"/>
</dbReference>
<dbReference type="PDB" id="3GH2">
    <property type="method" value="X-ray"/>
    <property type="resolution" value="1.75 A"/>
    <property type="chains" value="X=1-313"/>
</dbReference>
<dbReference type="PDB" id="3H9K">
    <property type="method" value="X-ray"/>
    <property type="resolution" value="2.65 A"/>
    <property type="chains" value="A/B/C/D/E=1-313"/>
</dbReference>
<dbReference type="PDB" id="3HB8">
    <property type="method" value="X-ray"/>
    <property type="resolution" value="2.74 A"/>
    <property type="chains" value="A/B/C/D/E=1-313"/>
</dbReference>
<dbReference type="PDB" id="3N5E">
    <property type="method" value="X-ray"/>
    <property type="resolution" value="2.26 A"/>
    <property type="chains" value="A/B=1-313"/>
</dbReference>
<dbReference type="PDB" id="3N5G">
    <property type="method" value="X-ray"/>
    <property type="resolution" value="2.27 A"/>
    <property type="chains" value="A=1-313"/>
</dbReference>
<dbReference type="PDB" id="3OB7">
    <property type="method" value="X-ray"/>
    <property type="resolution" value="2.75 A"/>
    <property type="chains" value="A/B/C/D/E=1-313"/>
</dbReference>
<dbReference type="PDB" id="4E28">
    <property type="method" value="X-ray"/>
    <property type="resolution" value="2.30 A"/>
    <property type="chains" value="A=1-313"/>
</dbReference>
<dbReference type="PDB" id="4FGT">
    <property type="method" value="X-ray"/>
    <property type="resolution" value="2.00 A"/>
    <property type="chains" value="A=1-311"/>
</dbReference>
<dbReference type="PDB" id="4G2O">
    <property type="method" value="X-ray"/>
    <property type="resolution" value="2.25 A"/>
    <property type="chains" value="X=1-313"/>
</dbReference>
<dbReference type="PDB" id="4G6W">
    <property type="method" value="X-ray"/>
    <property type="resolution" value="2.30 A"/>
    <property type="chains" value="X=1-313"/>
</dbReference>
<dbReference type="PDB" id="4GD7">
    <property type="method" value="X-ray"/>
    <property type="resolution" value="2.29 A"/>
    <property type="chains" value="A=1-313"/>
</dbReference>
<dbReference type="PDB" id="4GYH">
    <property type="method" value="X-ray"/>
    <property type="resolution" value="3.00 A"/>
    <property type="chains" value="A=1-313"/>
</dbReference>
<dbReference type="PDB" id="4H1I">
    <property type="method" value="X-ray"/>
    <property type="resolution" value="3.10 A"/>
    <property type="chains" value="A/B/C/D=1-313"/>
</dbReference>
<dbReference type="PDB" id="4JEF">
    <property type="method" value="X-ray"/>
    <property type="resolution" value="2.31 A"/>
    <property type="chains" value="A=26-311"/>
</dbReference>
<dbReference type="PDB" id="4KPW">
    <property type="method" value="X-ray"/>
    <property type="resolution" value="2.03 A"/>
    <property type="chains" value="A=1-313"/>
</dbReference>
<dbReference type="PDB" id="4O1U">
    <property type="method" value="X-ray"/>
    <property type="resolution" value="2.26 A"/>
    <property type="chains" value="A/B=1-313"/>
</dbReference>
<dbReference type="PDB" id="4O1X">
    <property type="method" value="X-ray"/>
    <property type="resolution" value="2.32 A"/>
    <property type="chains" value="A/B/C/D=1-313"/>
</dbReference>
<dbReference type="PDB" id="4UP1">
    <property type="method" value="X-ray"/>
    <property type="resolution" value="2.99 A"/>
    <property type="chains" value="A/B/C/D=1-313"/>
</dbReference>
<dbReference type="PDB" id="5HS3">
    <property type="method" value="X-ray"/>
    <property type="resolution" value="3.10 A"/>
    <property type="chains" value="A/B/C/D/E/F=26-313"/>
</dbReference>
<dbReference type="PDB" id="5WRN">
    <property type="method" value="X-ray"/>
    <property type="resolution" value="2.39 A"/>
    <property type="chains" value="A/B/C/D/E/F=26-313"/>
</dbReference>
<dbReference type="PDB" id="5X4W">
    <property type="method" value="X-ray"/>
    <property type="resolution" value="2.10 A"/>
    <property type="chains" value="A=1-313"/>
</dbReference>
<dbReference type="PDB" id="5X4X">
    <property type="method" value="X-ray"/>
    <property type="resolution" value="2.31 A"/>
    <property type="chains" value="A=1-313"/>
</dbReference>
<dbReference type="PDB" id="5X4Y">
    <property type="method" value="X-ray"/>
    <property type="resolution" value="2.20 A"/>
    <property type="chains" value="A=1-313"/>
</dbReference>
<dbReference type="PDB" id="5X5A">
    <property type="method" value="X-ray"/>
    <property type="resolution" value="2.39 A"/>
    <property type="chains" value="A/B/C/D/E/F=26-313"/>
</dbReference>
<dbReference type="PDB" id="5X5D">
    <property type="method" value="X-ray"/>
    <property type="resolution" value="2.00 A"/>
    <property type="chains" value="A/B/C/D/E/F=26-313"/>
</dbReference>
<dbReference type="PDB" id="5X5Q">
    <property type="method" value="X-ray"/>
    <property type="resolution" value="2.79 A"/>
    <property type="chains" value="A/B/C/D/E/F=26-313"/>
</dbReference>
<dbReference type="PDB" id="5X66">
    <property type="method" value="X-ray"/>
    <property type="resolution" value="1.99 A"/>
    <property type="chains" value="A/B/C/D/E/F=26-313"/>
</dbReference>
<dbReference type="PDB" id="5X67">
    <property type="method" value="X-ray"/>
    <property type="resolution" value="2.13 A"/>
    <property type="chains" value="A/B=26-313"/>
</dbReference>
<dbReference type="PDB" id="5X69">
    <property type="method" value="X-ray"/>
    <property type="resolution" value="2.69 A"/>
    <property type="chains" value="A/B/C/D/E/F=26-313"/>
</dbReference>
<dbReference type="PDB" id="6OJU">
    <property type="method" value="X-ray"/>
    <property type="resolution" value="2.88 A"/>
    <property type="chains" value="A/B/C/D=26-313"/>
</dbReference>
<dbReference type="PDB" id="6OJV">
    <property type="method" value="X-ray"/>
    <property type="resolution" value="2.59 A"/>
    <property type="chains" value="A/B/C/D=26-313"/>
</dbReference>
<dbReference type="PDB" id="6PF3">
    <property type="method" value="X-ray"/>
    <property type="resolution" value="2.39 A"/>
    <property type="chains" value="A/B/C/D=26-313"/>
</dbReference>
<dbReference type="PDB" id="6PF4">
    <property type="method" value="X-ray"/>
    <property type="resolution" value="2.85 A"/>
    <property type="chains" value="A/B/C/D=26-313"/>
</dbReference>
<dbReference type="PDB" id="6PF5">
    <property type="method" value="X-ray"/>
    <property type="resolution" value="2.39 A"/>
    <property type="chains" value="A/B/C/D=26-313"/>
</dbReference>
<dbReference type="PDB" id="6PF6">
    <property type="method" value="X-ray"/>
    <property type="resolution" value="2.50 A"/>
    <property type="chains" value="A/B/C/D=26-313"/>
</dbReference>
<dbReference type="PDB" id="6QXG">
    <property type="method" value="X-ray"/>
    <property type="resolution" value="2.08 A"/>
    <property type="chains" value="A/B/C=1-313"/>
</dbReference>
<dbReference type="PDB" id="6QXH">
    <property type="method" value="X-ray"/>
    <property type="resolution" value="2.04 A"/>
    <property type="chains" value="A/B/C=1-313"/>
</dbReference>
<dbReference type="PDB" id="6QYQ">
    <property type="method" value="X-ray"/>
    <property type="resolution" value="2.25 A"/>
    <property type="chains" value="A/B/C/D=1-313"/>
</dbReference>
<dbReference type="PDB" id="6R2E">
    <property type="method" value="X-ray"/>
    <property type="resolution" value="2.55 A"/>
    <property type="chains" value="A/B/C/D/E/F/G/H=1-313"/>
</dbReference>
<dbReference type="PDB" id="6ZXO">
    <property type="method" value="X-ray"/>
    <property type="resolution" value="2.60 A"/>
    <property type="chains" value="A/B/C/D/E/F=1-313"/>
</dbReference>
<dbReference type="PDBsum" id="1HVY"/>
<dbReference type="PDBsum" id="1HW3"/>
<dbReference type="PDBsum" id="1HW4"/>
<dbReference type="PDBsum" id="1HZW"/>
<dbReference type="PDBsum" id="1I00"/>
<dbReference type="PDBsum" id="1JU6"/>
<dbReference type="PDBsum" id="1JUJ"/>
<dbReference type="PDBsum" id="1YPV"/>
<dbReference type="PDBsum" id="2ONB"/>
<dbReference type="PDBsum" id="2RD8"/>
<dbReference type="PDBsum" id="2RDA"/>
<dbReference type="PDBsum" id="3EAW"/>
<dbReference type="PDBsum" id="3EBU"/>
<dbReference type="PDBsum" id="3ED7"/>
<dbReference type="PDBsum" id="3EDW"/>
<dbReference type="PDBsum" id="3EF9"/>
<dbReference type="PDBsum" id="3EGY"/>
<dbReference type="PDBsum" id="3EHI"/>
<dbReference type="PDBsum" id="3EJL"/>
<dbReference type="PDBsum" id="3GG5"/>
<dbReference type="PDBsum" id="3GH0"/>
<dbReference type="PDBsum" id="3GH2"/>
<dbReference type="PDBsum" id="3H9K"/>
<dbReference type="PDBsum" id="3HB8"/>
<dbReference type="PDBsum" id="3N5E"/>
<dbReference type="PDBsum" id="3N5G"/>
<dbReference type="PDBsum" id="3OB7"/>
<dbReference type="PDBsum" id="4E28"/>
<dbReference type="PDBsum" id="4FGT"/>
<dbReference type="PDBsum" id="4G2O"/>
<dbReference type="PDBsum" id="4G6W"/>
<dbReference type="PDBsum" id="4GD7"/>
<dbReference type="PDBsum" id="4GYH"/>
<dbReference type="PDBsum" id="4H1I"/>
<dbReference type="PDBsum" id="4JEF"/>
<dbReference type="PDBsum" id="4KPW"/>
<dbReference type="PDBsum" id="4O1U"/>
<dbReference type="PDBsum" id="4O1X"/>
<dbReference type="PDBsum" id="4UP1"/>
<dbReference type="PDBsum" id="5HS3"/>
<dbReference type="PDBsum" id="5WRN"/>
<dbReference type="PDBsum" id="5X4W"/>
<dbReference type="PDBsum" id="5X4X"/>
<dbReference type="PDBsum" id="5X4Y"/>
<dbReference type="PDBsum" id="5X5A"/>
<dbReference type="PDBsum" id="5X5D"/>
<dbReference type="PDBsum" id="5X5Q"/>
<dbReference type="PDBsum" id="5X66"/>
<dbReference type="PDBsum" id="5X67"/>
<dbReference type="PDBsum" id="5X69"/>
<dbReference type="PDBsum" id="6OJU"/>
<dbReference type="PDBsum" id="6OJV"/>
<dbReference type="PDBsum" id="6PF3"/>
<dbReference type="PDBsum" id="6PF4"/>
<dbReference type="PDBsum" id="6PF5"/>
<dbReference type="PDBsum" id="6PF6"/>
<dbReference type="PDBsum" id="6QXG"/>
<dbReference type="PDBsum" id="6QXH"/>
<dbReference type="PDBsum" id="6QYQ"/>
<dbReference type="PDBsum" id="6R2E"/>
<dbReference type="PDBsum" id="6ZXO"/>
<dbReference type="SMR" id="P04818"/>
<dbReference type="BioGRID" id="113149">
    <property type="interactions" value="113"/>
</dbReference>
<dbReference type="CORUM" id="P04818"/>
<dbReference type="FunCoup" id="P04818">
    <property type="interactions" value="2448"/>
</dbReference>
<dbReference type="IntAct" id="P04818">
    <property type="interactions" value="27"/>
</dbReference>
<dbReference type="MINT" id="P04818"/>
<dbReference type="STRING" id="9606.ENSP00000315644"/>
<dbReference type="BindingDB" id="P04818"/>
<dbReference type="ChEMBL" id="CHEMBL1952"/>
<dbReference type="DrugBank" id="DB03541">
    <property type="generic name" value="10-Propargyl-5,8-Dideazafolic Acid"/>
</dbReference>
<dbReference type="DrugBank" id="DB07577">
    <property type="generic name" value="2,4-Diamino-5-phenyl-6-ethylpyrimidine"/>
</dbReference>
<dbReference type="DrugBank" id="DB08734">
    <property type="generic name" value="6,6-DIMETHYL-1-[3-(2,4,5-TRICHLOROPHENOXY)PROPOXY]-1,6-DIHYDRO-1,3,5-TRIAZINE-2,4-DIAMINE"/>
</dbReference>
<dbReference type="DrugBank" id="DB05308">
    <property type="generic name" value="ANX-510"/>
</dbReference>
<dbReference type="DrugBank" id="DB01101">
    <property type="generic name" value="Capecitabine"/>
</dbReference>
<dbReference type="DrugBank" id="DB03800">
    <property type="generic name" value="Deoxyuridine monophosphate"/>
</dbReference>
<dbReference type="DrugBank" id="DB00322">
    <property type="generic name" value="Floxuridine"/>
</dbReference>
<dbReference type="DrugBank" id="DB00544">
    <property type="generic name" value="Fluorouracil"/>
</dbReference>
<dbReference type="DrugBank" id="DB14859">
    <property type="generic name" value="Fosifloxuridine nafalbenamide"/>
</dbReference>
<dbReference type="DrugBank" id="DB00441">
    <property type="generic name" value="Gemcitabine"/>
</dbReference>
<dbReference type="DrugBank" id="DB00563">
    <property type="generic name" value="Methotrexate"/>
</dbReference>
<dbReference type="DrugBank" id="DB08479">
    <property type="generic name" value="N-(3,5-dimethoxyphenyl)imidodicarbonimidic diamide"/>
</dbReference>
<dbReference type="DrugBank" id="DB08478">
    <property type="generic name" value="N-[2-Chloro-5-(trifluoromethyl)phenyl]imidodicarbonimidic diamide"/>
</dbReference>
<dbReference type="DrugBank" id="DB05457">
    <property type="generic name" value="OSI-7904L"/>
</dbReference>
<dbReference type="DrugBank" id="DB00642">
    <property type="generic name" value="Pemetrexed"/>
</dbReference>
<dbReference type="DrugBank" id="DB06813">
    <property type="generic name" value="Pralatrexate"/>
</dbReference>
<dbReference type="DrugBank" id="DB00293">
    <property type="generic name" value="Raltitrexed"/>
</dbReference>
<dbReference type="DrugBank" id="DB04530">
    <property type="generic name" value="S,S-(2-Hydroxyethyl)Thiocysteine"/>
</dbReference>
<dbReference type="DrugBank" id="DB09256">
    <property type="generic name" value="Tegafur"/>
</dbReference>
<dbReference type="DrugBank" id="DB09327">
    <property type="generic name" value="Tegafur-uracil"/>
</dbReference>
<dbReference type="DrugBank" id="DB05116">
    <property type="generic name" value="Thymectacin"/>
</dbReference>
<dbReference type="DrugBank" id="DB01643">
    <property type="generic name" value="Thymidine monophosphate"/>
</dbReference>
<dbReference type="DrugBank" id="DB00432">
    <property type="generic name" value="Trifluridine"/>
</dbReference>
<dbReference type="DrugCentral" id="P04818"/>
<dbReference type="GuidetoPHARMACOLOGY" id="2642"/>
<dbReference type="MoonProt" id="P04818"/>
<dbReference type="GlyGen" id="P04818">
    <property type="glycosylation" value="3 sites, 1 N-linked glycan (1 site), 1 O-linked glycan (2 sites)"/>
</dbReference>
<dbReference type="iPTMnet" id="P04818"/>
<dbReference type="MetOSite" id="P04818"/>
<dbReference type="PhosphoSitePlus" id="P04818"/>
<dbReference type="SwissPalm" id="P04818"/>
<dbReference type="BioMuta" id="TYMS"/>
<dbReference type="DMDM" id="136611"/>
<dbReference type="jPOST" id="P04818"/>
<dbReference type="MassIVE" id="P04818"/>
<dbReference type="PaxDb" id="9606-ENSP00000315644"/>
<dbReference type="PeptideAtlas" id="P04818"/>
<dbReference type="ProteomicsDB" id="51747">
    <molecule id="P04818-1"/>
</dbReference>
<dbReference type="ProteomicsDB" id="75165"/>
<dbReference type="ProteomicsDB" id="75166"/>
<dbReference type="Pumba" id="P04818"/>
<dbReference type="TopDownProteomics" id="P04818-1">
    <molecule id="P04818-1"/>
</dbReference>
<dbReference type="Antibodypedia" id="3461">
    <property type="antibodies" value="1270 antibodies from 42 providers"/>
</dbReference>
<dbReference type="DNASU" id="7298"/>
<dbReference type="Ensembl" id="ENST00000323224.7">
    <molecule id="P04818-2"/>
    <property type="protein sequence ID" value="ENSP00000314727.7"/>
    <property type="gene ID" value="ENSG00000176890.16"/>
</dbReference>
<dbReference type="Ensembl" id="ENST00000323250.9">
    <molecule id="P04818-3"/>
    <property type="protein sequence ID" value="ENSP00000314902.5"/>
    <property type="gene ID" value="ENSG00000176890.16"/>
</dbReference>
<dbReference type="Ensembl" id="ENST00000323274.15">
    <molecule id="P04818-1"/>
    <property type="protein sequence ID" value="ENSP00000315644.10"/>
    <property type="gene ID" value="ENSG00000176890.16"/>
</dbReference>
<dbReference type="GeneID" id="7298"/>
<dbReference type="KEGG" id="hsa:7298"/>
<dbReference type="MANE-Select" id="ENST00000323274.15">
    <property type="protein sequence ID" value="ENSP00000315644.10"/>
    <property type="RefSeq nucleotide sequence ID" value="NM_001071.4"/>
    <property type="RefSeq protein sequence ID" value="NP_001062.1"/>
</dbReference>
<dbReference type="UCSC" id="uc010dkb.2">
    <molecule id="P04818-1"/>
    <property type="organism name" value="human"/>
</dbReference>
<dbReference type="AGR" id="HGNC:12441"/>
<dbReference type="CTD" id="7298"/>
<dbReference type="DisGeNET" id="7298"/>
<dbReference type="GeneCards" id="TYMS"/>
<dbReference type="HGNC" id="HGNC:12441">
    <property type="gene designation" value="TYMS"/>
</dbReference>
<dbReference type="HPA" id="ENSG00000176890">
    <property type="expression patterns" value="Tissue enhanced (bone marrow, lymphoid tissue)"/>
</dbReference>
<dbReference type="MalaCards" id="TYMS"/>
<dbReference type="MIM" id="188350">
    <property type="type" value="gene"/>
</dbReference>
<dbReference type="MIM" id="620040">
    <property type="type" value="phenotype"/>
</dbReference>
<dbReference type="neXtProt" id="NX_P04818"/>
<dbReference type="OpenTargets" id="ENSG00000176890"/>
<dbReference type="Orphanet" id="1775">
    <property type="disease" value="Dyskeratosis congenita"/>
</dbReference>
<dbReference type="PharmGKB" id="PA359"/>
<dbReference type="VEuPathDB" id="HostDB:ENSG00000176890"/>
<dbReference type="eggNOG" id="KOG0673">
    <property type="taxonomic scope" value="Eukaryota"/>
</dbReference>
<dbReference type="GeneTree" id="ENSGT00390000014786"/>
<dbReference type="HOGENOM" id="CLU_021669_0_2_1"/>
<dbReference type="InParanoid" id="P04818"/>
<dbReference type="OMA" id="AYGRFWR"/>
<dbReference type="OrthoDB" id="766at2759"/>
<dbReference type="PAN-GO" id="P04818">
    <property type="GO annotations" value="4 GO annotations based on evolutionary models"/>
</dbReference>
<dbReference type="PhylomeDB" id="P04818"/>
<dbReference type="TreeFam" id="TF353027"/>
<dbReference type="BioCyc" id="MetaCyc:HS11096-MONOMER"/>
<dbReference type="BRENDA" id="2.1.1.45">
    <property type="organism ID" value="2681"/>
</dbReference>
<dbReference type="PathwayCommons" id="P04818"/>
<dbReference type="Reactome" id="R-HSA-499943">
    <property type="pathway name" value="Interconversion of nucleotide di- and triphosphates"/>
</dbReference>
<dbReference type="Reactome" id="R-HSA-69205">
    <property type="pathway name" value="G1/S-Specific Transcription"/>
</dbReference>
<dbReference type="SABIO-RK" id="P04818"/>
<dbReference type="SignaLink" id="P04818"/>
<dbReference type="SIGNOR" id="P04818"/>
<dbReference type="UniPathway" id="UPA00575"/>
<dbReference type="BioGRID-ORCS" id="7298">
    <property type="hits" value="334 hits in 1189 CRISPR screens"/>
</dbReference>
<dbReference type="ChiTaRS" id="TYMS">
    <property type="organism name" value="human"/>
</dbReference>
<dbReference type="EvolutionaryTrace" id="P04818"/>
<dbReference type="GeneWiki" id="Thymidylate_synthase"/>
<dbReference type="GenomeRNAi" id="7298"/>
<dbReference type="Pharos" id="P04818">
    <property type="development level" value="Tclin"/>
</dbReference>
<dbReference type="PRO" id="PR:P04818"/>
<dbReference type="Proteomes" id="UP000005640">
    <property type="component" value="Chromosome 18"/>
</dbReference>
<dbReference type="RNAct" id="P04818">
    <property type="molecule type" value="protein"/>
</dbReference>
<dbReference type="Bgee" id="ENSG00000176890">
    <property type="expression patterns" value="Expressed in ventricular zone and 184 other cell types or tissues"/>
</dbReference>
<dbReference type="ExpressionAtlas" id="P04818">
    <property type="expression patterns" value="baseline and differential"/>
</dbReference>
<dbReference type="GO" id="GO:0005737">
    <property type="term" value="C:cytoplasm"/>
    <property type="evidence" value="ECO:0000314"/>
    <property type="project" value="UniProtKB"/>
</dbReference>
<dbReference type="GO" id="GO:0005829">
    <property type="term" value="C:cytosol"/>
    <property type="evidence" value="ECO:0000318"/>
    <property type="project" value="GO_Central"/>
</dbReference>
<dbReference type="GO" id="GO:0005743">
    <property type="term" value="C:mitochondrial inner membrane"/>
    <property type="evidence" value="ECO:0000314"/>
    <property type="project" value="UniProtKB"/>
</dbReference>
<dbReference type="GO" id="GO:0005759">
    <property type="term" value="C:mitochondrial matrix"/>
    <property type="evidence" value="ECO:0000314"/>
    <property type="project" value="UniProtKB"/>
</dbReference>
<dbReference type="GO" id="GO:0005739">
    <property type="term" value="C:mitochondrion"/>
    <property type="evidence" value="ECO:0000314"/>
    <property type="project" value="UniProtKB"/>
</dbReference>
<dbReference type="GO" id="GO:0005634">
    <property type="term" value="C:nucleus"/>
    <property type="evidence" value="ECO:0000314"/>
    <property type="project" value="UniProtKB"/>
</dbReference>
<dbReference type="GO" id="GO:0005542">
    <property type="term" value="F:folic acid binding"/>
    <property type="evidence" value="ECO:0000305"/>
    <property type="project" value="BHF-UCL"/>
</dbReference>
<dbReference type="GO" id="GO:0000900">
    <property type="term" value="F:mRNA regulatory element binding translation repressor activity"/>
    <property type="evidence" value="ECO:0000314"/>
    <property type="project" value="CAFA"/>
</dbReference>
<dbReference type="GO" id="GO:1990825">
    <property type="term" value="F:sequence-specific mRNA binding"/>
    <property type="evidence" value="ECO:0000314"/>
    <property type="project" value="CAFA"/>
</dbReference>
<dbReference type="GO" id="GO:0004799">
    <property type="term" value="F:thymidylate synthase activity"/>
    <property type="evidence" value="ECO:0000314"/>
    <property type="project" value="CAFA"/>
</dbReference>
<dbReference type="GO" id="GO:0071897">
    <property type="term" value="P:DNA biosynthetic process"/>
    <property type="evidence" value="ECO:0000305"/>
    <property type="project" value="BHF-UCL"/>
</dbReference>
<dbReference type="GO" id="GO:0006231">
    <property type="term" value="P:dTMP biosynthetic process"/>
    <property type="evidence" value="ECO:0000314"/>
    <property type="project" value="CAFA"/>
</dbReference>
<dbReference type="GO" id="GO:0006235">
    <property type="term" value="P:dTTP biosynthetic process"/>
    <property type="evidence" value="ECO:0007669"/>
    <property type="project" value="UniProtKB-UniPathway"/>
</dbReference>
<dbReference type="GO" id="GO:0032259">
    <property type="term" value="P:methylation"/>
    <property type="evidence" value="ECO:0007669"/>
    <property type="project" value="UniProtKB-KW"/>
</dbReference>
<dbReference type="GO" id="GO:0017148">
    <property type="term" value="P:negative regulation of translation"/>
    <property type="evidence" value="ECO:0000314"/>
    <property type="project" value="CAFA"/>
</dbReference>
<dbReference type="GO" id="GO:0035999">
    <property type="term" value="P:tetrahydrofolate interconversion"/>
    <property type="evidence" value="ECO:0000314"/>
    <property type="project" value="BHF-UCL"/>
</dbReference>
<dbReference type="CDD" id="cd00351">
    <property type="entry name" value="TS_Pyrimidine_HMase"/>
    <property type="match status" value="1"/>
</dbReference>
<dbReference type="DisProt" id="DP00073"/>
<dbReference type="FunFam" id="3.30.572.10:FF:000007">
    <property type="entry name" value="thymidylate synthase isoform X2"/>
    <property type="match status" value="1"/>
</dbReference>
<dbReference type="Gene3D" id="3.30.572.10">
    <property type="entry name" value="Thymidylate synthase/dCMP hydroxymethylase domain"/>
    <property type="match status" value="1"/>
</dbReference>
<dbReference type="HAMAP" id="MF_00008">
    <property type="entry name" value="Thymidy_synth_bact"/>
    <property type="match status" value="1"/>
</dbReference>
<dbReference type="InterPro" id="IPR045097">
    <property type="entry name" value="Thymidate_synth/dCMP_Mease"/>
</dbReference>
<dbReference type="InterPro" id="IPR023451">
    <property type="entry name" value="Thymidate_synth/dCMP_Mease_dom"/>
</dbReference>
<dbReference type="InterPro" id="IPR036926">
    <property type="entry name" value="Thymidate_synth/dCMP_Mease_sf"/>
</dbReference>
<dbReference type="InterPro" id="IPR000398">
    <property type="entry name" value="Thymidylate_synthase"/>
</dbReference>
<dbReference type="InterPro" id="IPR020940">
    <property type="entry name" value="Thymidylate_synthase_AS"/>
</dbReference>
<dbReference type="NCBIfam" id="NF002497">
    <property type="entry name" value="PRK01827.1-3"/>
    <property type="match status" value="1"/>
</dbReference>
<dbReference type="NCBIfam" id="TIGR03284">
    <property type="entry name" value="thym_sym"/>
    <property type="match status" value="1"/>
</dbReference>
<dbReference type="PANTHER" id="PTHR11548:SF2">
    <property type="entry name" value="THYMIDYLATE SYNTHASE"/>
    <property type="match status" value="1"/>
</dbReference>
<dbReference type="PANTHER" id="PTHR11548">
    <property type="entry name" value="THYMIDYLATE SYNTHASE 1"/>
    <property type="match status" value="1"/>
</dbReference>
<dbReference type="Pfam" id="PF00303">
    <property type="entry name" value="Thymidylat_synt"/>
    <property type="match status" value="1"/>
</dbReference>
<dbReference type="PRINTS" id="PR00108">
    <property type="entry name" value="THYMDSNTHASE"/>
</dbReference>
<dbReference type="SUPFAM" id="SSF55831">
    <property type="entry name" value="Thymidylate synthase/dCMP hydroxymethylase"/>
    <property type="match status" value="1"/>
</dbReference>
<dbReference type="PROSITE" id="PS00091">
    <property type="entry name" value="THYMIDYLATE_SYNTHASE"/>
    <property type="match status" value="1"/>
</dbReference>
<protein>
    <recommendedName>
        <fullName evidence="10">Thymidylate synthase</fullName>
        <shortName>TS</shortName>
        <shortName>TSase</shortName>
        <ecNumber evidence="4">2.1.1.45</ecNumber>
    </recommendedName>
</protein>
<name>TYSY_HUMAN</name>
<comment type="function">
    <text evidence="4 5">Catalyzes the reductive methylation of 2'-deoxyuridine 5'-monophosphate (dUMP) to thymidine 5'-monophosphate (dTMP), using the cosubstrate, 5,10- methylenetetrahydrofolate (CH2H4folate) as a 1-carbon donor and reductant and contributes to the de novo mitochondrial thymidylate biosynthesis pathway.</text>
</comment>
<comment type="catalytic activity">
    <reaction evidence="4">
        <text>dUMP + (6R)-5,10-methylene-5,6,7,8-tetrahydrofolate = 7,8-dihydrofolate + dTMP</text>
        <dbReference type="Rhea" id="RHEA:12104"/>
        <dbReference type="ChEBI" id="CHEBI:15636"/>
        <dbReference type="ChEBI" id="CHEBI:57451"/>
        <dbReference type="ChEBI" id="CHEBI:63528"/>
        <dbReference type="ChEBI" id="CHEBI:246422"/>
        <dbReference type="EC" id="2.1.1.45"/>
    </reaction>
    <physiologicalReaction direction="left-to-right" evidence="11">
        <dbReference type="Rhea" id="RHEA:12105"/>
    </physiologicalReaction>
</comment>
<comment type="pathway">
    <text evidence="11">Pyrimidine metabolism; dTTP biosynthesis.</text>
</comment>
<comment type="subunit">
    <text evidence="2">Homodimer.</text>
</comment>
<comment type="subcellular location">
    <subcellularLocation>
        <location evidence="5">Nucleus</location>
    </subcellularLocation>
    <subcellularLocation>
        <location evidence="5">Cytoplasm</location>
    </subcellularLocation>
    <subcellularLocation>
        <location evidence="5">Mitochondrion</location>
    </subcellularLocation>
    <subcellularLocation>
        <location evidence="5">Mitochondrion matrix</location>
    </subcellularLocation>
    <subcellularLocation>
        <location evidence="5">Mitochondrion inner membrane</location>
    </subcellularLocation>
</comment>
<comment type="alternative products">
    <event type="alternative splicing"/>
    <isoform>
        <id>P04818-1</id>
        <name>1</name>
        <sequence type="displayed"/>
    </isoform>
    <isoform>
        <id>P04818-2</id>
        <name>2</name>
        <name>delta4</name>
        <sequence type="described" ref="VSP_047746"/>
    </isoform>
    <isoform>
        <id>P04818-3</id>
        <name>3</name>
        <name>delta2+3</name>
        <sequence type="described" ref="VSP_047745"/>
    </isoform>
</comment>
<comment type="disease" evidence="7">
    <disease id="DI-06506">
        <name>Dyskeratosis congenita, digenic</name>
        <acronym>DKCD</acronym>
        <description>A form of dyskeratosis congenita, a rare multisystem disorder caused by defective telomere maintenance. It is characterized by progressive bone marrow failure, and the clinical triad of reticulated skin hyperpigmentation, nail dystrophy, and mucosal leukoplakia. Common but variable features include premature graying, aplastic anemia, low platelets, osteoporosis, pulmonary fibrosis, and liver fibrosis among others. Early mortality is often associated with bone marrow failure, infections, fatal pulmonary complications, or malignancy. DKCD transmission pattern is consistent with digenic inheritance.</description>
        <dbReference type="MIM" id="620040"/>
    </disease>
    <text evidence="7">The disease is caused by variants affecting distinct genetic loci, including the gene represented in this entry. TYMS germline variants in the presence of a common ENOSF1 haplotype (defined by rs699517, rs2790 and rs1512643) result in severe thymidylate synthase deficiency and disease. The pathogenic mechanism involves increased expression of ENOSF1 relative to TYMS, and post-transcriptional inhibition of TYMS translation through ENOSF1-TYMS RNA-RNA interactions.</text>
</comment>
<comment type="miscellaneous">
    <molecule>Isoform 2</molecule>
    <text evidence="10">Expressed both in normal and cancerous tissues.</text>
</comment>
<comment type="miscellaneous">
    <molecule>Isoform 3</molecule>
    <text evidence="10">Expressed only in cancerous tissues.</text>
</comment>
<comment type="similarity">
    <text evidence="10">Belongs to the thymidylate synthase family.</text>
</comment>
<keyword id="KW-0002">3D-structure</keyword>
<keyword id="KW-0025">Alternative splicing</keyword>
<keyword id="KW-0963">Cytoplasm</keyword>
<keyword id="KW-0903">Direct protein sequencing</keyword>
<keyword id="KW-0225">Disease variant</keyword>
<keyword id="KW-1011">Dyskeratosis congenita</keyword>
<keyword id="KW-1017">Isopeptide bond</keyword>
<keyword id="KW-0472">Membrane</keyword>
<keyword id="KW-0489">Methyltransferase</keyword>
<keyword id="KW-0496">Mitochondrion</keyword>
<keyword id="KW-0999">Mitochondrion inner membrane</keyword>
<keyword id="KW-0545">Nucleotide biosynthesis</keyword>
<keyword id="KW-0539">Nucleus</keyword>
<keyword id="KW-0597">Phosphoprotein</keyword>
<keyword id="KW-1267">Proteomics identification</keyword>
<keyword id="KW-1185">Reference proteome</keyword>
<keyword id="KW-0808">Transferase</keyword>
<keyword id="KW-0832">Ubl conjugation</keyword>
<reference key="1">
    <citation type="journal article" date="1985" name="Nucleic Acids Res.">
        <title>Nucleotide sequence of a functional cDNA for human thymidylate synthase.</title>
        <authorList>
            <person name="Takeishi K."/>
            <person name="Kaneda S."/>
            <person name="Ayusawa D."/>
            <person name="Shimizu K."/>
            <person name="Gotoh O."/>
            <person name="Seno T."/>
        </authorList>
    </citation>
    <scope>NUCLEOTIDE SEQUENCE [MRNA] (ISOFORM 1)</scope>
</reference>
<reference key="2">
    <citation type="journal article" date="1990" name="J. Biol. Chem.">
        <title>Structural and functional analysis of the human thymidylate synthase gene.</title>
        <authorList>
            <person name="Kaneda S."/>
            <person name="Nalbantoglu J."/>
            <person name="Takeishi K."/>
            <person name="Shimizu K."/>
            <person name="Gotoh O."/>
            <person name="Seno T."/>
            <person name="Ayusawa D."/>
        </authorList>
    </citation>
    <scope>NUCLEOTIDE SEQUENCE [GENOMIC DNA]</scope>
</reference>
<reference key="3">
    <citation type="journal article" date="2003" name="Cancer Lett.">
        <title>Differential alternative splicing expressions of thymidylate synthase isoforms.</title>
        <authorList>
            <person name="Hisatomi H."/>
            <person name="Tanemura H."/>
            <person name="Iizuka T."/>
            <person name="Katsumata K."/>
            <person name="Nagao K."/>
            <person name="Sumida H."/>
            <person name="Udagawa H."/>
            <person name="Hikiji K."/>
        </authorList>
    </citation>
    <scope>NUCLEOTIDE SEQUENCE [MRNA] (ISOFORMS 2 AND 3)</scope>
    <scope>ALTERNATIVE SPLICING</scope>
</reference>
<reference key="4">
    <citation type="submission" date="2001-05" db="EMBL/GenBank/DDBJ databases">
        <title>Identification of immuno-peptidmics that are recognized by tumor-reactive CTL generated from TIL of colon cancer patients.</title>
        <authorList>
            <person name="Shichijo S."/>
            <person name="Itoh K."/>
        </authorList>
    </citation>
    <scope>NUCLEOTIDE SEQUENCE [LARGE SCALE MRNA] (ISOFORM 1)</scope>
    <source>
        <tissue>Colon adenocarcinoma</tissue>
    </source>
</reference>
<reference key="5">
    <citation type="journal article" date="2005" name="Nature">
        <title>DNA sequence and analysis of human chromosome 18.</title>
        <authorList>
            <person name="Nusbaum C."/>
            <person name="Zody M.C."/>
            <person name="Borowsky M.L."/>
            <person name="Kamal M."/>
            <person name="Kodira C.D."/>
            <person name="Taylor T.D."/>
            <person name="Whittaker C.A."/>
            <person name="Chang J.L."/>
            <person name="Cuomo C.A."/>
            <person name="Dewar K."/>
            <person name="FitzGerald M.G."/>
            <person name="Yang X."/>
            <person name="Abouelleil A."/>
            <person name="Allen N.R."/>
            <person name="Anderson S."/>
            <person name="Bloom T."/>
            <person name="Bugalter B."/>
            <person name="Butler J."/>
            <person name="Cook A."/>
            <person name="DeCaprio D."/>
            <person name="Engels R."/>
            <person name="Garber M."/>
            <person name="Gnirke A."/>
            <person name="Hafez N."/>
            <person name="Hall J.L."/>
            <person name="Norman C.H."/>
            <person name="Itoh T."/>
            <person name="Jaffe D.B."/>
            <person name="Kuroki Y."/>
            <person name="Lehoczky J."/>
            <person name="Lui A."/>
            <person name="Macdonald P."/>
            <person name="Mauceli E."/>
            <person name="Mikkelsen T.S."/>
            <person name="Naylor J.W."/>
            <person name="Nicol R."/>
            <person name="Nguyen C."/>
            <person name="Noguchi H."/>
            <person name="O'Leary S.B."/>
            <person name="Piqani B."/>
            <person name="Smith C.L."/>
            <person name="Talamas J.A."/>
            <person name="Topham K."/>
            <person name="Totoki Y."/>
            <person name="Toyoda A."/>
            <person name="Wain H.M."/>
            <person name="Young S.K."/>
            <person name="Zeng Q."/>
            <person name="Zimmer A.R."/>
            <person name="Fujiyama A."/>
            <person name="Hattori M."/>
            <person name="Birren B.W."/>
            <person name="Sakaki Y."/>
            <person name="Lander E.S."/>
        </authorList>
    </citation>
    <scope>NUCLEOTIDE SEQUENCE [LARGE SCALE GENOMIC DNA]</scope>
</reference>
<reference key="6">
    <citation type="submission" date="2005-09" db="EMBL/GenBank/DDBJ databases">
        <authorList>
            <person name="Mural R.J."/>
            <person name="Istrail S."/>
            <person name="Sutton G."/>
            <person name="Florea L."/>
            <person name="Halpern A.L."/>
            <person name="Mobarry C.M."/>
            <person name="Lippert R."/>
            <person name="Walenz B."/>
            <person name="Shatkay H."/>
            <person name="Dew I."/>
            <person name="Miller J.R."/>
            <person name="Flanigan M.J."/>
            <person name="Edwards N.J."/>
            <person name="Bolanos R."/>
            <person name="Fasulo D."/>
            <person name="Halldorsson B.V."/>
            <person name="Hannenhalli S."/>
            <person name="Turner R."/>
            <person name="Yooseph S."/>
            <person name="Lu F."/>
            <person name="Nusskern D.R."/>
            <person name="Shue B.C."/>
            <person name="Zheng X.H."/>
            <person name="Zhong F."/>
            <person name="Delcher A.L."/>
            <person name="Huson D.H."/>
            <person name="Kravitz S.A."/>
            <person name="Mouchard L."/>
            <person name="Reinert K."/>
            <person name="Remington K.A."/>
            <person name="Clark A.G."/>
            <person name="Waterman M.S."/>
            <person name="Eichler E.E."/>
            <person name="Adams M.D."/>
            <person name="Hunkapiller M.W."/>
            <person name="Myers E.W."/>
            <person name="Venter J.C."/>
        </authorList>
    </citation>
    <scope>NUCLEOTIDE SEQUENCE [LARGE SCALE GENOMIC DNA]</scope>
</reference>
<reference key="7">
    <citation type="journal article" date="2004" name="Genome Res.">
        <title>The status, quality, and expansion of the NIH full-length cDNA project: the Mammalian Gene Collection (MGC).</title>
        <authorList>
            <consortium name="The MGC Project Team"/>
        </authorList>
    </citation>
    <scope>NUCLEOTIDE SEQUENCE [LARGE SCALE MRNA] (ISOFORM 1)</scope>
    <source>
        <tissue>Bone marrow</tissue>
        <tissue>Placenta</tissue>
        <tissue>Skin</tissue>
    </source>
</reference>
<reference key="8">
    <citation type="journal article" date="1989" name="J. Biochem.">
        <title>Human thymidylate synthase gene: isolation of phage clones which cover a functionally active gene and structural analysis of the region upstream from the translation initiation codon.</title>
        <authorList>
            <person name="Takeishi K."/>
            <person name="Kaneda S."/>
            <person name="Ayusawa D."/>
            <person name="Shimizu K."/>
            <person name="Gotoh O."/>
            <person name="Seno T."/>
        </authorList>
    </citation>
    <scope>NUCLEOTIDE SEQUENCE OF 1-68</scope>
</reference>
<reference key="9">
    <citation type="journal article" date="1985" name="J. Biochem.">
        <title>Purification and NH2-terminal amino acid sequence of human thymidylate synthase in an overproducing transformant of mouse FM3A cells.</title>
        <authorList>
            <person name="Shimizu K."/>
            <person name="Ayusawa D."/>
            <person name="Takeishi K."/>
            <person name="Seno T."/>
        </authorList>
    </citation>
    <scope>PROTEIN SEQUENCE OF 2-25</scope>
</reference>
<reference key="10">
    <citation type="journal article" date="1989" name="J. Biol. Chem.">
        <title>Expression of human thymidylate synthase in Escherichia coli.</title>
        <authorList>
            <person name="Davisson V.J."/>
            <person name="Sirawaraporn W."/>
            <person name="Santi D.V."/>
        </authorList>
    </citation>
    <scope>PROTEIN SEQUENCE OF 2-10</scope>
</reference>
<reference key="11">
    <citation type="journal article" date="2009" name="Sci. Signal.">
        <title>Quantitative phosphoproteomic analysis of T cell receptor signaling reveals system-wide modulation of protein-protein interactions.</title>
        <authorList>
            <person name="Mayya V."/>
            <person name="Lundgren D.H."/>
            <person name="Hwang S.-I."/>
            <person name="Rezaul K."/>
            <person name="Wu L."/>
            <person name="Eng J.K."/>
            <person name="Rodionov V."/>
            <person name="Han D.K."/>
        </authorList>
    </citation>
    <scope>PHOSPHORYLATION [LARGE SCALE ANALYSIS] AT SER-114</scope>
    <scope>IDENTIFICATION BY MASS SPECTROMETRY [LARGE SCALE ANALYSIS]</scope>
    <source>
        <tissue>Leukemic T-cell</tissue>
    </source>
</reference>
<reference key="12">
    <citation type="journal article" date="2011" name="BMC Syst. Biol.">
        <title>Initial characterization of the human central proteome.</title>
        <authorList>
            <person name="Burkard T.R."/>
            <person name="Planyavsky M."/>
            <person name="Kaupe I."/>
            <person name="Breitwieser F.P."/>
            <person name="Buerckstuemmer T."/>
            <person name="Bennett K.L."/>
            <person name="Superti-Furga G."/>
            <person name="Colinge J."/>
        </authorList>
    </citation>
    <scope>IDENTIFICATION BY MASS SPECTROMETRY [LARGE SCALE ANALYSIS]</scope>
</reference>
<reference key="13">
    <citation type="journal article" date="2011" name="Proc. Natl. Acad. Sci. U.S.A.">
        <title>Identification of a de novo thymidylate biosynthesis pathway in mammalian mitochondria.</title>
        <authorList>
            <person name="Anderson D.D."/>
            <person name="Quintero C.M."/>
            <person name="Stover P.J."/>
        </authorList>
    </citation>
    <scope>FUNCTION</scope>
    <scope>SUBCELLULAR LOCATION</scope>
</reference>
<reference key="14">
    <citation type="journal article" date="2012" name="Proc. Natl. Acad. Sci. U.S.A.">
        <title>N-terminal acetylome analyses and functional insights of the N-terminal acetyltransferase NatB.</title>
        <authorList>
            <person name="Van Damme P."/>
            <person name="Lasa M."/>
            <person name="Polevoda B."/>
            <person name="Gazquez C."/>
            <person name="Elosegui-Artola A."/>
            <person name="Kim D.S."/>
            <person name="De Juan-Pardo E."/>
            <person name="Demeyer K."/>
            <person name="Hole K."/>
            <person name="Larrea E."/>
            <person name="Timmerman E."/>
            <person name="Prieto J."/>
            <person name="Arnesen T."/>
            <person name="Sherman F."/>
            <person name="Gevaert K."/>
            <person name="Aldabe R."/>
        </authorList>
    </citation>
    <scope>IDENTIFICATION BY MASS SPECTROMETRY [LARGE SCALE ANALYSIS]</scope>
</reference>
<reference key="15">
    <citation type="journal article" date="2013" name="J. Proteome Res.">
        <title>Toward a comprehensive characterization of a human cancer cell phosphoproteome.</title>
        <authorList>
            <person name="Zhou H."/>
            <person name="Di Palma S."/>
            <person name="Preisinger C."/>
            <person name="Peng M."/>
            <person name="Polat A.N."/>
            <person name="Heck A.J."/>
            <person name="Mohammed S."/>
        </authorList>
    </citation>
    <scope>PHOSPHORYLATION [LARGE SCALE ANALYSIS] AT SER-114</scope>
    <scope>IDENTIFICATION BY MASS SPECTROMETRY [LARGE SCALE ANALYSIS]</scope>
    <source>
        <tissue>Erythroleukemia</tissue>
    </source>
</reference>
<reference key="16">
    <citation type="journal article" date="2017" name="Nat. Struct. Mol. Biol.">
        <title>Site-specific mapping of the human SUMO proteome reveals co-modification with phosphorylation.</title>
        <authorList>
            <person name="Hendriks I.A."/>
            <person name="Lyon D."/>
            <person name="Young C."/>
            <person name="Jensen L.J."/>
            <person name="Vertegaal A.C."/>
            <person name="Nielsen M.L."/>
        </authorList>
    </citation>
    <scope>SUMOYLATION [LARGE SCALE ANALYSIS] AT LYS-287; LYS-292 AND LYS-308</scope>
    <scope>IDENTIFICATION BY MASS SPECTROMETRY [LARGE SCALE ANALYSIS]</scope>
</reference>
<reference key="17">
    <citation type="journal article" date="1995" name="Biochemistry">
        <title>Crystal structure of human thymidylate synthase: a structural mechanism for guiding substrates into the active site.</title>
        <authorList>
            <person name="Schiffer C.A."/>
            <person name="Clifton I.J."/>
            <person name="Davisson V.J."/>
            <person name="Santi D.V."/>
            <person name="Stroud R.M."/>
        </authorList>
    </citation>
    <scope>X-RAY CRYSTALLOGRAPHY (3.0 ANGSTROMS)</scope>
</reference>
<reference key="18">
    <citation type="journal article" date="2001" name="Biochemistry">
        <title>Human thymidylate synthase is in the closed conformation when complexed with dUMP and raltitrexed, an antifolate drug.</title>
        <authorList>
            <person name="Phan J."/>
            <person name="Koli S."/>
            <person name="Minor W."/>
            <person name="Dunlap R.B."/>
            <person name="Berger S.H."/>
            <person name="Lebioda L."/>
        </authorList>
    </citation>
    <scope>X-RAY CRYSTALLOGRAPHY (1.9 ANGSTROMS)</scope>
</reference>
<reference key="19">
    <citation type="journal article" date="2001" name="J. Biol. Chem.">
        <title>Structure of human thymidylate synthase suggests advantages of chemotherapy with noncompetitive inhibitors.</title>
        <authorList>
            <person name="Phan J."/>
            <person name="Steadman D.J."/>
            <person name="Koli S."/>
            <person name="Ding W.C."/>
            <person name="Minor W."/>
            <person name="Dunlap R.B."/>
            <person name="Berger S.H."/>
            <person name="Lebioda L."/>
        </authorList>
    </citation>
    <scope>X-RAY CRYSTALLOGRAPHY (2.0 ANGSTROMS)</scope>
    <scope>FUNCTION</scope>
    <scope>CATALYTIC ACTIVITY</scope>
</reference>
<reference key="20">
    <citation type="journal article" date="2022" name="Am. J. Hum. Genet.">
        <title>Germline thymidylate synthase deficiency impacts nucleotide metabolism and causes dyskeratosis congenita.</title>
        <authorList>
            <person name="Tummala H."/>
            <person name="Walne A."/>
            <person name="Buccafusca R."/>
            <person name="Alnajar J."/>
            <person name="Szabo A."/>
            <person name="Robinson P."/>
            <person name="McConkie-Rosell A."/>
            <person name="Wilson M."/>
            <person name="Crowley S."/>
            <person name="Kinsler V."/>
            <person name="Ewins A.M."/>
            <person name="Madapura P.M."/>
            <person name="Patel M."/>
            <person name="Pontikos N."/>
            <person name="Codd V."/>
            <person name="Vulliamy T."/>
            <person name="Dokal I."/>
        </authorList>
    </citation>
    <scope>VARIANTS DKCD LYS-87; 115-ARG--VAL-313 DEL; HIS-160 AND 271-ARG--VAL-313 DEL</scope>
    <scope>CHARACTERIZATION OF VARIANT DKCD 115-ARG--VAL-313 DEL</scope>
    <scope>INVOLVEMENT IN DKCD</scope>
</reference>
<organism>
    <name type="scientific">Homo sapiens</name>
    <name type="common">Human</name>
    <dbReference type="NCBI Taxonomy" id="9606"/>
    <lineage>
        <taxon>Eukaryota</taxon>
        <taxon>Metazoa</taxon>
        <taxon>Chordata</taxon>
        <taxon>Craniata</taxon>
        <taxon>Vertebrata</taxon>
        <taxon>Euteleostomi</taxon>
        <taxon>Mammalia</taxon>
        <taxon>Eutheria</taxon>
        <taxon>Euarchontoglires</taxon>
        <taxon>Primates</taxon>
        <taxon>Haplorrhini</taxon>
        <taxon>Catarrhini</taxon>
        <taxon>Hominidae</taxon>
        <taxon>Homo</taxon>
    </lineage>
</organism>
<gene>
    <name evidence="12" type="primary">TYMS</name>
    <name type="synonym">TS</name>
    <name type="ORF">OK/SW-cl.29</name>
</gene>